<name>DCUP_MAIZE</name>
<organism>
    <name type="scientific">Zea mays</name>
    <name type="common">Maize</name>
    <dbReference type="NCBI Taxonomy" id="4577"/>
    <lineage>
        <taxon>Eukaryota</taxon>
        <taxon>Viridiplantae</taxon>
        <taxon>Streptophyta</taxon>
        <taxon>Embryophyta</taxon>
        <taxon>Tracheophyta</taxon>
        <taxon>Spermatophyta</taxon>
        <taxon>Magnoliopsida</taxon>
        <taxon>Liliopsida</taxon>
        <taxon>Poales</taxon>
        <taxon>Poaceae</taxon>
        <taxon>PACMAD clade</taxon>
        <taxon>Panicoideae</taxon>
        <taxon>Andropogonodae</taxon>
        <taxon>Andropogoneae</taxon>
        <taxon>Tripsacinae</taxon>
        <taxon>Zea</taxon>
    </lineage>
</organism>
<protein>
    <recommendedName>
        <fullName>Uroporphyrinogen decarboxylase, chloroplastic</fullName>
        <shortName>UPD</shortName>
        <shortName>URO-D</shortName>
        <ecNumber>4.1.1.37</ecNumber>
    </recommendedName>
</protein>
<reference key="1">
    <citation type="journal article" date="1998" name="Plant Cell">
        <title>A porphyrin pathway impairment is responsible for the phenotype of a dominant disease lesion mimic mutant of maize.</title>
        <authorList>
            <person name="Hu G."/>
            <person name="Yalpani N."/>
            <person name="Briggs S.P."/>
            <person name="Johal G.S."/>
        </authorList>
    </citation>
    <scope>NUCLEOTIDE SEQUENCE [MRNA]</scope>
</reference>
<gene>
    <name type="primary">LES22</name>
</gene>
<accession>O81220</accession>
<keyword id="KW-0149">Chlorophyll biosynthesis</keyword>
<keyword id="KW-0150">Chloroplast</keyword>
<keyword id="KW-0210">Decarboxylase</keyword>
<keyword id="KW-0456">Lyase</keyword>
<keyword id="KW-0934">Plastid</keyword>
<keyword id="KW-0627">Porphyrin biosynthesis</keyword>
<keyword id="KW-1185">Reference proteome</keyword>
<keyword id="KW-0809">Transit peptide</keyword>
<evidence type="ECO:0000250" key="1"/>
<evidence type="ECO:0000255" key="2"/>
<evidence type="ECO:0000256" key="3">
    <source>
        <dbReference type="SAM" id="MobiDB-lite"/>
    </source>
</evidence>
<evidence type="ECO:0000305" key="4"/>
<feature type="transit peptide" description="Chloroplast" evidence="2">
    <location>
        <begin position="1"/>
        <end status="unknown"/>
    </location>
</feature>
<feature type="chain" id="PRO_0000036330" description="Uroporphyrinogen decarboxylase, chloroplastic">
    <location>
        <begin status="unknown"/>
        <end position="393"/>
    </location>
</feature>
<feature type="region of interest" description="Disordered" evidence="3">
    <location>
        <begin position="1"/>
        <end position="64"/>
    </location>
</feature>
<feature type="compositionally biased region" description="Low complexity" evidence="3">
    <location>
        <begin position="23"/>
        <end position="37"/>
    </location>
</feature>
<feature type="compositionally biased region" description="Basic and acidic residues" evidence="3">
    <location>
        <begin position="38"/>
        <end position="50"/>
    </location>
</feature>
<feature type="binding site" evidence="1">
    <location>
        <begin position="73"/>
        <end position="77"/>
    </location>
    <ligand>
        <name>substrate</name>
    </ligand>
</feature>
<feature type="binding site" evidence="1">
    <location>
        <position position="92"/>
    </location>
    <ligand>
        <name>substrate</name>
    </ligand>
</feature>
<feature type="binding site" evidence="1">
    <location>
        <position position="122"/>
    </location>
    <ligand>
        <name>substrate</name>
    </ligand>
</feature>
<feature type="binding site" evidence="1">
    <location>
        <position position="123"/>
    </location>
    <ligand>
        <name>substrate</name>
    </ligand>
</feature>
<feature type="binding site" evidence="1">
    <location>
        <position position="200"/>
    </location>
    <ligand>
        <name>substrate</name>
    </ligand>
</feature>
<feature type="binding site" evidence="1">
    <location>
        <position position="255"/>
    </location>
    <ligand>
        <name>substrate</name>
    </ligand>
</feature>
<feature type="binding site" evidence="1">
    <location>
        <position position="370"/>
    </location>
    <ligand>
        <name>substrate</name>
    </ligand>
</feature>
<feature type="site" description="Transition state stabilizer" evidence="1">
    <location>
        <position position="123"/>
    </location>
</feature>
<dbReference type="EC" id="4.1.1.37"/>
<dbReference type="EMBL" id="AF058763">
    <property type="protein sequence ID" value="AAC31883.1"/>
    <property type="molecule type" value="mRNA"/>
</dbReference>
<dbReference type="PIR" id="T01653">
    <property type="entry name" value="T01653"/>
</dbReference>
<dbReference type="SMR" id="O81220"/>
<dbReference type="STRING" id="4577.O81220"/>
<dbReference type="eggNOG" id="KOG2872">
    <property type="taxonomic scope" value="Eukaryota"/>
</dbReference>
<dbReference type="InParanoid" id="O81220"/>
<dbReference type="UniPathway" id="UPA00251">
    <property type="reaction ID" value="UER00321"/>
</dbReference>
<dbReference type="Proteomes" id="UP000007305">
    <property type="component" value="Unplaced"/>
</dbReference>
<dbReference type="ExpressionAtlas" id="O81220">
    <property type="expression patterns" value="baseline and differential"/>
</dbReference>
<dbReference type="GO" id="GO:0009507">
    <property type="term" value="C:chloroplast"/>
    <property type="evidence" value="ECO:0007669"/>
    <property type="project" value="UniProtKB-SubCell"/>
</dbReference>
<dbReference type="GO" id="GO:0004853">
    <property type="term" value="F:uroporphyrinogen decarboxylase activity"/>
    <property type="evidence" value="ECO:0007669"/>
    <property type="project" value="UniProtKB-EC"/>
</dbReference>
<dbReference type="GO" id="GO:0015995">
    <property type="term" value="P:chlorophyll biosynthetic process"/>
    <property type="evidence" value="ECO:0007669"/>
    <property type="project" value="UniProtKB-KW"/>
</dbReference>
<dbReference type="GO" id="GO:0006782">
    <property type="term" value="P:protoporphyrinogen IX biosynthetic process"/>
    <property type="evidence" value="ECO:0007669"/>
    <property type="project" value="UniProtKB-UniPathway"/>
</dbReference>
<dbReference type="CDD" id="cd00717">
    <property type="entry name" value="URO-D"/>
    <property type="match status" value="1"/>
</dbReference>
<dbReference type="FunFam" id="3.20.20.210:FF:000006">
    <property type="entry name" value="Uroporphyrinogen decarboxylase"/>
    <property type="match status" value="1"/>
</dbReference>
<dbReference type="Gene3D" id="3.20.20.210">
    <property type="match status" value="1"/>
</dbReference>
<dbReference type="HAMAP" id="MF_00218">
    <property type="entry name" value="URO_D"/>
    <property type="match status" value="1"/>
</dbReference>
<dbReference type="InterPro" id="IPR038071">
    <property type="entry name" value="UROD/MetE-like_sf"/>
</dbReference>
<dbReference type="InterPro" id="IPR006361">
    <property type="entry name" value="Uroporphyrinogen_deCO2ase_HemE"/>
</dbReference>
<dbReference type="InterPro" id="IPR000257">
    <property type="entry name" value="Uroporphyrinogen_deCOase"/>
</dbReference>
<dbReference type="NCBIfam" id="TIGR01464">
    <property type="entry name" value="hemE"/>
    <property type="match status" value="1"/>
</dbReference>
<dbReference type="PANTHER" id="PTHR21091">
    <property type="entry name" value="METHYLTETRAHYDROFOLATE:HOMOCYSTEINE METHYLTRANSFERASE RELATED"/>
    <property type="match status" value="1"/>
</dbReference>
<dbReference type="PANTHER" id="PTHR21091:SF169">
    <property type="entry name" value="UROPORPHYRINOGEN DECARBOXYLASE"/>
    <property type="match status" value="1"/>
</dbReference>
<dbReference type="Pfam" id="PF01208">
    <property type="entry name" value="URO-D"/>
    <property type="match status" value="1"/>
</dbReference>
<dbReference type="SUPFAM" id="SSF51726">
    <property type="entry name" value="UROD/MetE-like"/>
    <property type="match status" value="1"/>
</dbReference>
<dbReference type="PROSITE" id="PS00906">
    <property type="entry name" value="UROD_1"/>
    <property type="match status" value="1"/>
</dbReference>
<dbReference type="PROSITE" id="PS00907">
    <property type="entry name" value="UROD_2"/>
    <property type="match status" value="1"/>
</dbReference>
<proteinExistence type="evidence at transcript level"/>
<sequence>MATACPPLSLPSTSLFRGRSARAGPNAGSSRPSAAAPSERRSWRRPRPDGGRAAAGERNQREEVERPPVWLMRQAGRYMKSYQLLCERYPSFRERSENVDLVVEISLQPWKVFKPDGVILFSDILTPLPGMNIPFDIVKGKGPVIYDPLRTAAAVNEVREFVPEEWVPYVGQALNILRQEVKNEAAVLGFVGAPFTLASYCVEGGSSKNFTLIKKMAFSEPAILHNLLQKFTTSMANYIKYQADNGAQAVQIFDSWATELSPADFEEFSLPYLKQIVDSVRETHPDLPLILYASGSGGLLERLPLTGVDVVSLDWTVDMAEGRKRLGSNTAVQGNVDPGVLFGSKEFITRRIYDTVQKAGNVGHVLNLGHGIKVGTPEENVAHFFEVAKGIRY</sequence>
<comment type="function">
    <text evidence="1">Catalyzes the decarboxylation of four acetate groups of uroporphyrinogen-III to yield coproporphyrinogen-III.</text>
</comment>
<comment type="catalytic activity">
    <reaction>
        <text>uroporphyrinogen III + 4 H(+) = coproporphyrinogen III + 4 CO2</text>
        <dbReference type="Rhea" id="RHEA:19865"/>
        <dbReference type="ChEBI" id="CHEBI:15378"/>
        <dbReference type="ChEBI" id="CHEBI:16526"/>
        <dbReference type="ChEBI" id="CHEBI:57308"/>
        <dbReference type="ChEBI" id="CHEBI:57309"/>
        <dbReference type="EC" id="4.1.1.37"/>
    </reaction>
</comment>
<comment type="pathway">
    <text>Porphyrin-containing compound metabolism; protoporphyrin-IX biosynthesis; coproporphyrinogen-III from 5-aminolevulinate: step 4/4.</text>
</comment>
<comment type="subunit">
    <text evidence="1">Homodimer.</text>
</comment>
<comment type="subcellular location">
    <subcellularLocation>
        <location>Plastid</location>
        <location>Chloroplast</location>
    </subcellularLocation>
</comment>
<comment type="similarity">
    <text evidence="4">Belongs to the uroporphyrinogen decarboxylase family.</text>
</comment>